<feature type="chain" id="PRO_1000077078" description="Ribose-5-phosphate isomerase A">
    <location>
        <begin position="1"/>
        <end position="219"/>
    </location>
</feature>
<feature type="active site" description="Proton acceptor" evidence="1">
    <location>
        <position position="103"/>
    </location>
</feature>
<feature type="binding site" evidence="1">
    <location>
        <begin position="28"/>
        <end position="31"/>
    </location>
    <ligand>
        <name>substrate</name>
    </ligand>
</feature>
<feature type="binding site" evidence="1">
    <location>
        <begin position="81"/>
        <end position="84"/>
    </location>
    <ligand>
        <name>substrate</name>
    </ligand>
</feature>
<feature type="binding site" evidence="1">
    <location>
        <begin position="94"/>
        <end position="97"/>
    </location>
    <ligand>
        <name>substrate</name>
    </ligand>
</feature>
<feature type="binding site" evidence="1">
    <location>
        <position position="121"/>
    </location>
    <ligand>
        <name>substrate</name>
    </ligand>
</feature>
<comment type="function">
    <text evidence="1">Catalyzes the reversible conversion of ribose-5-phosphate to ribulose 5-phosphate.</text>
</comment>
<comment type="catalytic activity">
    <reaction evidence="1">
        <text>aldehydo-D-ribose 5-phosphate = D-ribulose 5-phosphate</text>
        <dbReference type="Rhea" id="RHEA:14657"/>
        <dbReference type="ChEBI" id="CHEBI:58121"/>
        <dbReference type="ChEBI" id="CHEBI:58273"/>
        <dbReference type="EC" id="5.3.1.6"/>
    </reaction>
</comment>
<comment type="pathway">
    <text evidence="1">Carbohydrate degradation; pentose phosphate pathway; D-ribose 5-phosphate from D-ribulose 5-phosphate (non-oxidative stage): step 1/1.</text>
</comment>
<comment type="subunit">
    <text evidence="1">Homodimer.</text>
</comment>
<comment type="similarity">
    <text evidence="1">Belongs to the ribose 5-phosphate isomerase family.</text>
</comment>
<reference key="1">
    <citation type="submission" date="2007-10" db="EMBL/GenBank/DDBJ databases">
        <title>Complete sequence of Shewanella pealeana ATCC 700345.</title>
        <authorList>
            <consortium name="US DOE Joint Genome Institute"/>
            <person name="Copeland A."/>
            <person name="Lucas S."/>
            <person name="Lapidus A."/>
            <person name="Barry K."/>
            <person name="Glavina del Rio T."/>
            <person name="Dalin E."/>
            <person name="Tice H."/>
            <person name="Pitluck S."/>
            <person name="Chertkov O."/>
            <person name="Brettin T."/>
            <person name="Bruce D."/>
            <person name="Detter J.C."/>
            <person name="Han C."/>
            <person name="Schmutz J."/>
            <person name="Larimer F."/>
            <person name="Land M."/>
            <person name="Hauser L."/>
            <person name="Kyrpides N."/>
            <person name="Kim E."/>
            <person name="Zhao J.-S.Z."/>
            <person name="Manno D."/>
            <person name="Hawari J."/>
            <person name="Richardson P."/>
        </authorList>
    </citation>
    <scope>NUCLEOTIDE SEQUENCE [LARGE SCALE GENOMIC DNA]</scope>
    <source>
        <strain>ATCC 700345 / ANG-SQ1</strain>
    </source>
</reference>
<proteinExistence type="inferred from homology"/>
<gene>
    <name evidence="1" type="primary">rpiA</name>
    <name type="ordered locus">Spea_0816</name>
</gene>
<evidence type="ECO:0000255" key="1">
    <source>
        <dbReference type="HAMAP-Rule" id="MF_00170"/>
    </source>
</evidence>
<organism>
    <name type="scientific">Shewanella pealeana (strain ATCC 700345 / ANG-SQ1)</name>
    <dbReference type="NCBI Taxonomy" id="398579"/>
    <lineage>
        <taxon>Bacteria</taxon>
        <taxon>Pseudomonadati</taxon>
        <taxon>Pseudomonadota</taxon>
        <taxon>Gammaproteobacteria</taxon>
        <taxon>Alteromonadales</taxon>
        <taxon>Shewanellaceae</taxon>
        <taxon>Shewanella</taxon>
    </lineage>
</organism>
<name>RPIA_SHEPA</name>
<keyword id="KW-0413">Isomerase</keyword>
<keyword id="KW-1185">Reference proteome</keyword>
<accession>A8H0Q6</accession>
<protein>
    <recommendedName>
        <fullName evidence="1">Ribose-5-phosphate isomerase A</fullName>
        <ecNumber evidence="1">5.3.1.6</ecNumber>
    </recommendedName>
    <alternativeName>
        <fullName evidence="1">Phosphoriboisomerase A</fullName>
        <shortName evidence="1">PRI</shortName>
    </alternativeName>
</protein>
<dbReference type="EC" id="5.3.1.6" evidence="1"/>
<dbReference type="EMBL" id="CP000851">
    <property type="protein sequence ID" value="ABV86143.1"/>
    <property type="molecule type" value="Genomic_DNA"/>
</dbReference>
<dbReference type="RefSeq" id="WP_012154077.1">
    <property type="nucleotide sequence ID" value="NC_009901.1"/>
</dbReference>
<dbReference type="SMR" id="A8H0Q6"/>
<dbReference type="STRING" id="398579.Spea_0816"/>
<dbReference type="KEGG" id="spl:Spea_0816"/>
<dbReference type="eggNOG" id="COG0120">
    <property type="taxonomic scope" value="Bacteria"/>
</dbReference>
<dbReference type="HOGENOM" id="CLU_056590_1_1_6"/>
<dbReference type="OrthoDB" id="5870696at2"/>
<dbReference type="UniPathway" id="UPA00115">
    <property type="reaction ID" value="UER00412"/>
</dbReference>
<dbReference type="Proteomes" id="UP000002608">
    <property type="component" value="Chromosome"/>
</dbReference>
<dbReference type="GO" id="GO:0005829">
    <property type="term" value="C:cytosol"/>
    <property type="evidence" value="ECO:0007669"/>
    <property type="project" value="TreeGrafter"/>
</dbReference>
<dbReference type="GO" id="GO:0004751">
    <property type="term" value="F:ribose-5-phosphate isomerase activity"/>
    <property type="evidence" value="ECO:0007669"/>
    <property type="project" value="UniProtKB-UniRule"/>
</dbReference>
<dbReference type="GO" id="GO:0006014">
    <property type="term" value="P:D-ribose metabolic process"/>
    <property type="evidence" value="ECO:0007669"/>
    <property type="project" value="TreeGrafter"/>
</dbReference>
<dbReference type="GO" id="GO:0009052">
    <property type="term" value="P:pentose-phosphate shunt, non-oxidative branch"/>
    <property type="evidence" value="ECO:0007669"/>
    <property type="project" value="UniProtKB-UniRule"/>
</dbReference>
<dbReference type="CDD" id="cd01398">
    <property type="entry name" value="RPI_A"/>
    <property type="match status" value="1"/>
</dbReference>
<dbReference type="FunFam" id="3.30.70.260:FF:000004">
    <property type="entry name" value="Ribose-5-phosphate isomerase A"/>
    <property type="match status" value="1"/>
</dbReference>
<dbReference type="FunFam" id="3.40.50.1360:FF:000001">
    <property type="entry name" value="Ribose-5-phosphate isomerase A"/>
    <property type="match status" value="1"/>
</dbReference>
<dbReference type="Gene3D" id="3.30.70.260">
    <property type="match status" value="1"/>
</dbReference>
<dbReference type="Gene3D" id="3.40.50.1360">
    <property type="match status" value="1"/>
</dbReference>
<dbReference type="HAMAP" id="MF_00170">
    <property type="entry name" value="Rib_5P_isom_A"/>
    <property type="match status" value="1"/>
</dbReference>
<dbReference type="InterPro" id="IPR037171">
    <property type="entry name" value="NagB/RpiA_transferase-like"/>
</dbReference>
<dbReference type="InterPro" id="IPR020672">
    <property type="entry name" value="Ribose5P_isomerase_typA_subgr"/>
</dbReference>
<dbReference type="InterPro" id="IPR004788">
    <property type="entry name" value="Ribose5P_isomerase_type_A"/>
</dbReference>
<dbReference type="NCBIfam" id="NF001924">
    <property type="entry name" value="PRK00702.1"/>
    <property type="match status" value="1"/>
</dbReference>
<dbReference type="NCBIfam" id="TIGR00021">
    <property type="entry name" value="rpiA"/>
    <property type="match status" value="1"/>
</dbReference>
<dbReference type="PANTHER" id="PTHR11934">
    <property type="entry name" value="RIBOSE-5-PHOSPHATE ISOMERASE"/>
    <property type="match status" value="1"/>
</dbReference>
<dbReference type="PANTHER" id="PTHR11934:SF0">
    <property type="entry name" value="RIBOSE-5-PHOSPHATE ISOMERASE"/>
    <property type="match status" value="1"/>
</dbReference>
<dbReference type="Pfam" id="PF06026">
    <property type="entry name" value="Rib_5-P_isom_A"/>
    <property type="match status" value="1"/>
</dbReference>
<dbReference type="SUPFAM" id="SSF75445">
    <property type="entry name" value="D-ribose-5-phosphate isomerase (RpiA), lid domain"/>
    <property type="match status" value="1"/>
</dbReference>
<dbReference type="SUPFAM" id="SSF100950">
    <property type="entry name" value="NagB/RpiA/CoA transferase-like"/>
    <property type="match status" value="1"/>
</dbReference>
<sequence length="219" mass="23504">MTQDEMKKAAGWAALQYVEENSIVGVGTGSTVNHFIDALATMKFDIEGAVSSSEASTEKMKALGIPVFDLNSVNELSVYVDGADEINSQMDMIKGGGAALTREKIVAAVADKFICIVDNTKQVDILGEFPLPIEVIPMARSYVARQIVKLGGDPVYREGCVTDNGNIIIDVYNMKIMKPKELEQQIDGIVGVVTNGLFAKRGADILLVGTPEGVKTVTF</sequence>